<proteinExistence type="inferred from homology"/>
<feature type="chain" id="PRO_0000327062" description="Protoheme IX farnesyltransferase">
    <location>
        <begin position="1"/>
        <end position="294"/>
    </location>
</feature>
<feature type="transmembrane region" description="Helical" evidence="1">
    <location>
        <begin position="22"/>
        <end position="42"/>
    </location>
</feature>
<feature type="transmembrane region" description="Helical" evidence="1">
    <location>
        <begin position="46"/>
        <end position="66"/>
    </location>
</feature>
<feature type="transmembrane region" description="Helical" evidence="1">
    <location>
        <begin position="89"/>
        <end position="109"/>
    </location>
</feature>
<feature type="transmembrane region" description="Helical" evidence="1">
    <location>
        <begin position="116"/>
        <end position="136"/>
    </location>
</feature>
<feature type="transmembrane region" description="Helical" evidence="1">
    <location>
        <begin position="143"/>
        <end position="163"/>
    </location>
</feature>
<feature type="transmembrane region" description="Helical" evidence="1">
    <location>
        <begin position="170"/>
        <end position="190"/>
    </location>
</feature>
<feature type="transmembrane region" description="Helical" evidence="1">
    <location>
        <begin position="211"/>
        <end position="231"/>
    </location>
</feature>
<feature type="transmembrane region" description="Helical" evidence="1">
    <location>
        <begin position="232"/>
        <end position="252"/>
    </location>
</feature>
<feature type="transmembrane region" description="Helical" evidence="1">
    <location>
        <begin position="272"/>
        <end position="292"/>
    </location>
</feature>
<keyword id="KW-0997">Cell inner membrane</keyword>
<keyword id="KW-1003">Cell membrane</keyword>
<keyword id="KW-0350">Heme biosynthesis</keyword>
<keyword id="KW-0472">Membrane</keyword>
<keyword id="KW-1185">Reference proteome</keyword>
<keyword id="KW-0808">Transferase</keyword>
<keyword id="KW-0812">Transmembrane</keyword>
<keyword id="KW-1133">Transmembrane helix</keyword>
<organism>
    <name type="scientific">Herminiimonas arsenicoxydans</name>
    <dbReference type="NCBI Taxonomy" id="204773"/>
    <lineage>
        <taxon>Bacteria</taxon>
        <taxon>Pseudomonadati</taxon>
        <taxon>Pseudomonadota</taxon>
        <taxon>Betaproteobacteria</taxon>
        <taxon>Burkholderiales</taxon>
        <taxon>Oxalobacteraceae</taxon>
        <taxon>Herminiimonas</taxon>
    </lineage>
</organism>
<evidence type="ECO:0000255" key="1">
    <source>
        <dbReference type="HAMAP-Rule" id="MF_00154"/>
    </source>
</evidence>
<name>COXX_HERAR</name>
<reference key="1">
    <citation type="journal article" date="2007" name="PLoS Genet.">
        <title>A tale of two oxidation states: bacterial colonization of arsenic-rich environments.</title>
        <authorList>
            <person name="Muller D."/>
            <person name="Medigue C."/>
            <person name="Koechler S."/>
            <person name="Barbe V."/>
            <person name="Barakat M."/>
            <person name="Talla E."/>
            <person name="Bonnefoy V."/>
            <person name="Krin E."/>
            <person name="Arsene-Ploetze F."/>
            <person name="Carapito C."/>
            <person name="Chandler M."/>
            <person name="Cournoyer B."/>
            <person name="Cruveiller S."/>
            <person name="Dossat C."/>
            <person name="Duval S."/>
            <person name="Heymann M."/>
            <person name="Leize E."/>
            <person name="Lieutaud A."/>
            <person name="Lievremont D."/>
            <person name="Makita Y."/>
            <person name="Mangenot S."/>
            <person name="Nitschke W."/>
            <person name="Ortet P."/>
            <person name="Perdrial N."/>
            <person name="Schoepp B."/>
            <person name="Siguier P."/>
            <person name="Simeonova D.D."/>
            <person name="Rouy Z."/>
            <person name="Segurens B."/>
            <person name="Turlin E."/>
            <person name="Vallenet D."/>
            <person name="van Dorsselaer A."/>
            <person name="Weiss S."/>
            <person name="Weissenbach J."/>
            <person name="Lett M.-C."/>
            <person name="Danchin A."/>
            <person name="Bertin P.N."/>
        </authorList>
    </citation>
    <scope>NUCLEOTIDE SEQUENCE [LARGE SCALE GENOMIC DNA]</scope>
    <source>
        <strain>ULPAs1</strain>
    </source>
</reference>
<dbReference type="EC" id="2.5.1.141" evidence="1"/>
<dbReference type="EMBL" id="CU207211">
    <property type="protein sequence ID" value="CAL63023.1"/>
    <property type="molecule type" value="Genomic_DNA"/>
</dbReference>
<dbReference type="SMR" id="A4G936"/>
<dbReference type="STRING" id="204773.HEAR2910"/>
<dbReference type="KEGG" id="har:HEAR2910"/>
<dbReference type="eggNOG" id="COG0109">
    <property type="taxonomic scope" value="Bacteria"/>
</dbReference>
<dbReference type="HOGENOM" id="CLU_029631_0_2_4"/>
<dbReference type="OrthoDB" id="9814417at2"/>
<dbReference type="UniPathway" id="UPA00834">
    <property type="reaction ID" value="UER00712"/>
</dbReference>
<dbReference type="Proteomes" id="UP000006697">
    <property type="component" value="Chromosome"/>
</dbReference>
<dbReference type="GO" id="GO:0005886">
    <property type="term" value="C:plasma membrane"/>
    <property type="evidence" value="ECO:0007669"/>
    <property type="project" value="UniProtKB-SubCell"/>
</dbReference>
<dbReference type="GO" id="GO:0008495">
    <property type="term" value="F:protoheme IX farnesyltransferase activity"/>
    <property type="evidence" value="ECO:0007669"/>
    <property type="project" value="UniProtKB-UniRule"/>
</dbReference>
<dbReference type="GO" id="GO:0048034">
    <property type="term" value="P:heme O biosynthetic process"/>
    <property type="evidence" value="ECO:0007669"/>
    <property type="project" value="UniProtKB-UniRule"/>
</dbReference>
<dbReference type="CDD" id="cd13957">
    <property type="entry name" value="PT_UbiA_Cox10"/>
    <property type="match status" value="1"/>
</dbReference>
<dbReference type="Gene3D" id="1.10.357.140">
    <property type="entry name" value="UbiA prenyltransferase"/>
    <property type="match status" value="1"/>
</dbReference>
<dbReference type="HAMAP" id="MF_00154">
    <property type="entry name" value="CyoE_CtaB"/>
    <property type="match status" value="1"/>
</dbReference>
<dbReference type="InterPro" id="IPR006369">
    <property type="entry name" value="Protohaem_IX_farnesylTrfase"/>
</dbReference>
<dbReference type="InterPro" id="IPR000537">
    <property type="entry name" value="UbiA_prenyltransferase"/>
</dbReference>
<dbReference type="InterPro" id="IPR030470">
    <property type="entry name" value="UbiA_prenylTrfase_CS"/>
</dbReference>
<dbReference type="InterPro" id="IPR044878">
    <property type="entry name" value="UbiA_sf"/>
</dbReference>
<dbReference type="NCBIfam" id="TIGR01473">
    <property type="entry name" value="cyoE_ctaB"/>
    <property type="match status" value="1"/>
</dbReference>
<dbReference type="NCBIfam" id="NF003349">
    <property type="entry name" value="PRK04375.1-2"/>
    <property type="match status" value="1"/>
</dbReference>
<dbReference type="PANTHER" id="PTHR43448:SF7">
    <property type="entry name" value="4-HYDROXYBENZOATE SOLANESYLTRANSFERASE"/>
    <property type="match status" value="1"/>
</dbReference>
<dbReference type="PANTHER" id="PTHR43448">
    <property type="entry name" value="PROTOHEME IX FARNESYLTRANSFERASE, MITOCHONDRIAL"/>
    <property type="match status" value="1"/>
</dbReference>
<dbReference type="Pfam" id="PF01040">
    <property type="entry name" value="UbiA"/>
    <property type="match status" value="1"/>
</dbReference>
<dbReference type="PROSITE" id="PS00943">
    <property type="entry name" value="UBIA"/>
    <property type="match status" value="1"/>
</dbReference>
<comment type="function">
    <text evidence="1">Converts heme B (protoheme IX) to heme O by substitution of the vinyl group on carbon 2 of heme B porphyrin ring with a hydroxyethyl farnesyl side group.</text>
</comment>
<comment type="catalytic activity">
    <reaction evidence="1">
        <text>heme b + (2E,6E)-farnesyl diphosphate + H2O = Fe(II)-heme o + diphosphate</text>
        <dbReference type="Rhea" id="RHEA:28070"/>
        <dbReference type="ChEBI" id="CHEBI:15377"/>
        <dbReference type="ChEBI" id="CHEBI:33019"/>
        <dbReference type="ChEBI" id="CHEBI:60344"/>
        <dbReference type="ChEBI" id="CHEBI:60530"/>
        <dbReference type="ChEBI" id="CHEBI:175763"/>
        <dbReference type="EC" id="2.5.1.141"/>
    </reaction>
</comment>
<comment type="pathway">
    <text evidence="1">Porphyrin-containing compound metabolism; heme O biosynthesis; heme O from protoheme: step 1/1.</text>
</comment>
<comment type="subcellular location">
    <subcellularLocation>
        <location evidence="1">Cell inner membrane</location>
        <topology evidence="1">Multi-pass membrane protein</topology>
    </subcellularLocation>
</comment>
<comment type="miscellaneous">
    <text evidence="1">Carbon 2 of the heme B porphyrin ring is defined according to the Fischer nomenclature.</text>
</comment>
<comment type="similarity">
    <text evidence="1">Belongs to the UbiA prenyltransferase family. Protoheme IX farnesyltransferase subfamily.</text>
</comment>
<sequence>MTTLIVSSNRIAQYWALTKPRVTQLAVFCAVIGMFLATPDLPDWKIVIAATIGIWLLAGAAFAINCLVEREIDSRMARTARRPMAQGEITVPQTLVFSGVIGGAGMWVLYNFVNPLTMWLTFATFVGYAVIYTIILKPATPQNIVIGGLSGAMPPALGWAAVANDLPMQAWILVLIIFIWTPPHFWALALYRRDEYAKSGLPMLPITHGTAFTQFHIWLYTIALVATTMLPFAVGMSGLIYLVVAAVLDVIFMWYAWQVYRHYTDMIARKMFTYSIIYLSLLFAALLVDHYLRF</sequence>
<gene>
    <name evidence="1" type="primary">ctaB</name>
    <name type="ordered locus">HEAR2910</name>
</gene>
<protein>
    <recommendedName>
        <fullName evidence="1">Protoheme IX farnesyltransferase</fullName>
        <ecNumber evidence="1">2.5.1.141</ecNumber>
    </recommendedName>
    <alternativeName>
        <fullName evidence="1">Heme B farnesyltransferase</fullName>
    </alternativeName>
    <alternativeName>
        <fullName evidence="1">Heme O synthase</fullName>
    </alternativeName>
</protein>
<accession>A4G936</accession>